<keyword id="KW-0028">Amino-acid biosynthesis</keyword>
<keyword id="KW-0997">Cell inner membrane</keyword>
<keyword id="KW-1003">Cell membrane</keyword>
<keyword id="KW-0198">Cysteine biosynthesis</keyword>
<keyword id="KW-0472">Membrane</keyword>
<keyword id="KW-1185">Reference proteome</keyword>
<keyword id="KW-0764">Sulfate transport</keyword>
<keyword id="KW-0812">Transmembrane</keyword>
<keyword id="KW-1133">Transmembrane helix</keyword>
<keyword id="KW-0813">Transport</keyword>
<organism>
    <name type="scientific">Escherichia coli O139:H28 (strain E24377A / ETEC)</name>
    <dbReference type="NCBI Taxonomy" id="331111"/>
    <lineage>
        <taxon>Bacteria</taxon>
        <taxon>Pseudomonadati</taxon>
        <taxon>Pseudomonadota</taxon>
        <taxon>Gammaproteobacteria</taxon>
        <taxon>Enterobacterales</taxon>
        <taxon>Enterobacteriaceae</taxon>
        <taxon>Escherichia</taxon>
    </lineage>
</organism>
<dbReference type="EMBL" id="CP000800">
    <property type="protein sequence ID" value="ABV16501.1"/>
    <property type="molecule type" value="Genomic_DNA"/>
</dbReference>
<dbReference type="RefSeq" id="WP_000254834.1">
    <property type="nucleotide sequence ID" value="NC_009801.1"/>
</dbReference>
<dbReference type="SMR" id="A7ZPL4"/>
<dbReference type="KEGG" id="ecw:EcE24377A_2700"/>
<dbReference type="HOGENOM" id="CLU_070331_1_0_6"/>
<dbReference type="Proteomes" id="UP000001122">
    <property type="component" value="Chromosome"/>
</dbReference>
<dbReference type="GO" id="GO:0005886">
    <property type="term" value="C:plasma membrane"/>
    <property type="evidence" value="ECO:0007669"/>
    <property type="project" value="UniProtKB-SubCell"/>
</dbReference>
<dbReference type="GO" id="GO:0009675">
    <property type="term" value="F:high-affinity sulfate:proton symporter activity"/>
    <property type="evidence" value="ECO:0007669"/>
    <property type="project" value="TreeGrafter"/>
</dbReference>
<dbReference type="GO" id="GO:0019344">
    <property type="term" value="P:cysteine biosynthetic process"/>
    <property type="evidence" value="ECO:0007669"/>
    <property type="project" value="UniProtKB-UniRule"/>
</dbReference>
<dbReference type="GO" id="GO:0000103">
    <property type="term" value="P:sulfate assimilation"/>
    <property type="evidence" value="ECO:0007669"/>
    <property type="project" value="InterPro"/>
</dbReference>
<dbReference type="HAMAP" id="MF_00468">
    <property type="entry name" value="CysZ"/>
    <property type="match status" value="1"/>
</dbReference>
<dbReference type="InterPro" id="IPR050480">
    <property type="entry name" value="CysZ_sulfate_transptr"/>
</dbReference>
<dbReference type="InterPro" id="IPR022985">
    <property type="entry name" value="Sulfate_CysZ"/>
</dbReference>
<dbReference type="NCBIfam" id="NF003433">
    <property type="entry name" value="PRK04949.1"/>
    <property type="match status" value="1"/>
</dbReference>
<dbReference type="PANTHER" id="PTHR37468">
    <property type="entry name" value="SULFATE TRANSPORTER CYSZ"/>
    <property type="match status" value="1"/>
</dbReference>
<dbReference type="PANTHER" id="PTHR37468:SF1">
    <property type="entry name" value="SULFATE TRANSPORTER CYSZ"/>
    <property type="match status" value="1"/>
</dbReference>
<dbReference type="Pfam" id="PF07264">
    <property type="entry name" value="EI24"/>
    <property type="match status" value="1"/>
</dbReference>
<accession>A7ZPL4</accession>
<feature type="chain" id="PRO_1000060361" description="Sulfate transporter CysZ">
    <location>
        <begin position="1"/>
        <end position="253"/>
    </location>
</feature>
<feature type="transmembrane region" description="Helical" evidence="1">
    <location>
        <begin position="31"/>
        <end position="51"/>
    </location>
</feature>
<feature type="transmembrane region" description="Helical" evidence="1">
    <location>
        <begin position="75"/>
        <end position="95"/>
    </location>
</feature>
<feature type="transmembrane region" description="Helical" evidence="1">
    <location>
        <begin position="151"/>
        <end position="171"/>
    </location>
</feature>
<feature type="transmembrane region" description="Helical" evidence="1">
    <location>
        <begin position="222"/>
        <end position="242"/>
    </location>
</feature>
<reference key="1">
    <citation type="journal article" date="2008" name="J. Bacteriol.">
        <title>The pangenome structure of Escherichia coli: comparative genomic analysis of E. coli commensal and pathogenic isolates.</title>
        <authorList>
            <person name="Rasko D.A."/>
            <person name="Rosovitz M.J."/>
            <person name="Myers G.S.A."/>
            <person name="Mongodin E.F."/>
            <person name="Fricke W.F."/>
            <person name="Gajer P."/>
            <person name="Crabtree J."/>
            <person name="Sebaihia M."/>
            <person name="Thomson N.R."/>
            <person name="Chaudhuri R."/>
            <person name="Henderson I.R."/>
            <person name="Sperandio V."/>
            <person name="Ravel J."/>
        </authorList>
    </citation>
    <scope>NUCLEOTIDE SEQUENCE [LARGE SCALE GENOMIC DNA]</scope>
    <source>
        <strain>E24377A / ETEC</strain>
    </source>
</reference>
<protein>
    <recommendedName>
        <fullName evidence="1">Sulfate transporter CysZ</fullName>
    </recommendedName>
</protein>
<evidence type="ECO:0000255" key="1">
    <source>
        <dbReference type="HAMAP-Rule" id="MF_00468"/>
    </source>
</evidence>
<proteinExistence type="inferred from homology"/>
<name>CYSZ_ECO24</name>
<comment type="function">
    <text evidence="1">High affinity, high specificity proton-dependent sulfate transporter, which mediates sulfate uptake. Provides the sulfur source for the cysteine synthesis pathway.</text>
</comment>
<comment type="subcellular location">
    <subcellularLocation>
        <location evidence="1">Cell inner membrane</location>
        <topology evidence="1">Multi-pass membrane protein</topology>
    </subcellularLocation>
</comment>
<comment type="similarity">
    <text evidence="1">Belongs to the CysZ family.</text>
</comment>
<gene>
    <name evidence="1" type="primary">cysZ</name>
    <name type="ordered locus">EcE24377A_2700</name>
</gene>
<sequence length="253" mass="29305">MVSSFTSAPRSGFYYFAQGWKLVSQPGIRRFVILPLLVNILLMGGAFWWLFTQLDVWIPTLMSYVPDWLQWLSYLLWPLAVISVLLVFGYFFSTIANWIAAPFNGLLAEQLEARLTGATPPDTGIFGIMKDVPRIMKREWQKFAWYLPRAIVLLIIYFIPGIGQTVAPVLWFLFSAWMLAIQYCDYPFDNHKVPFKEMRTALRTRKITNMQFGALTSLFTMIPLLNLFIMPVAVCGATAMWVDCYRDKHAMWR</sequence>